<dbReference type="EMBL" id="CP000682">
    <property type="protein sequence ID" value="ABP96264.1"/>
    <property type="molecule type" value="Genomic_DNA"/>
</dbReference>
<dbReference type="RefSeq" id="WP_012022051.1">
    <property type="nucleotide sequence ID" value="NC_009440.1"/>
</dbReference>
<dbReference type="SMR" id="A4YIL2"/>
<dbReference type="STRING" id="399549.Msed_2125"/>
<dbReference type="GeneID" id="91756662"/>
<dbReference type="KEGG" id="mse:Msed_2125"/>
<dbReference type="eggNOG" id="arCOG00497">
    <property type="taxonomic scope" value="Archaea"/>
</dbReference>
<dbReference type="HOGENOM" id="CLU_070010_4_0_2"/>
<dbReference type="Proteomes" id="UP000000242">
    <property type="component" value="Chromosome"/>
</dbReference>
<dbReference type="GO" id="GO:0016787">
    <property type="term" value="F:hydrolase activity"/>
    <property type="evidence" value="ECO:0007669"/>
    <property type="project" value="UniProtKB-UniRule"/>
</dbReference>
<dbReference type="Gene3D" id="3.60.15.10">
    <property type="entry name" value="Ribonuclease Z/Hydroxyacylglutathione hydrolase-like"/>
    <property type="match status" value="1"/>
</dbReference>
<dbReference type="HAMAP" id="MF_00457">
    <property type="entry name" value="UPF0173"/>
    <property type="match status" value="1"/>
</dbReference>
<dbReference type="InterPro" id="IPR001279">
    <property type="entry name" value="Metallo-B-lactamas"/>
</dbReference>
<dbReference type="InterPro" id="IPR036866">
    <property type="entry name" value="RibonucZ/Hydroxyglut_hydro"/>
</dbReference>
<dbReference type="InterPro" id="IPR022877">
    <property type="entry name" value="UPF0173"/>
</dbReference>
<dbReference type="InterPro" id="IPR050114">
    <property type="entry name" value="UPF0173_UPF0282_UlaG_hydrolase"/>
</dbReference>
<dbReference type="NCBIfam" id="NF001911">
    <property type="entry name" value="PRK00685.1"/>
    <property type="match status" value="1"/>
</dbReference>
<dbReference type="PANTHER" id="PTHR43546:SF3">
    <property type="entry name" value="UPF0173 METAL-DEPENDENT HYDROLASE MJ1163"/>
    <property type="match status" value="1"/>
</dbReference>
<dbReference type="PANTHER" id="PTHR43546">
    <property type="entry name" value="UPF0173 METAL-DEPENDENT HYDROLASE MJ1163-RELATED"/>
    <property type="match status" value="1"/>
</dbReference>
<dbReference type="Pfam" id="PF12706">
    <property type="entry name" value="Lactamase_B_2"/>
    <property type="match status" value="1"/>
</dbReference>
<dbReference type="SMART" id="SM00849">
    <property type="entry name" value="Lactamase_B"/>
    <property type="match status" value="1"/>
</dbReference>
<dbReference type="SUPFAM" id="SSF56281">
    <property type="entry name" value="Metallo-hydrolase/oxidoreductase"/>
    <property type="match status" value="1"/>
</dbReference>
<name>Y2125_METS5</name>
<reference key="1">
    <citation type="journal article" date="2008" name="Appl. Environ. Microbiol.">
        <title>The genome sequence of the metal-mobilizing, extremely thermoacidophilic archaeon Metallosphaera sedula provides insights into bioleaching-associated metabolism.</title>
        <authorList>
            <person name="Auernik K.S."/>
            <person name="Maezato Y."/>
            <person name="Blum P.H."/>
            <person name="Kelly R.M."/>
        </authorList>
    </citation>
    <scope>NUCLEOTIDE SEQUENCE [LARGE SCALE GENOMIC DNA]</scope>
    <source>
        <strain>ATCC 51363 / DSM 5348 / JCM 9185 / NBRC 15509 / TH2</strain>
    </source>
</reference>
<sequence length="226" mass="25078">MSQIRWLGHAAVEILISGKRVIIDPLIKDNPLSPVKLNYLEGVSVVGVTHDHYDHLGDVVEILKMNSNAKLFATFDLEMYLVNQFKVPEAQLIPANVGGYVEHEGIRLALTKAVHSSEHSDPTGIVVSDGRTTIYHAGDTGLFEDMKLIGQVFQPDYALLPIGGRFTMDPRQAVIAVDMIKPRKAAIPIHFNTWDMIRVDPQEFVKGVKDKGYEAILLQPGQSIEL</sequence>
<feature type="chain" id="PRO_1000081125" description="UPF0173 metal-dependent hydrolase Msed_2125">
    <location>
        <begin position="1"/>
        <end position="226"/>
    </location>
</feature>
<proteinExistence type="inferred from homology"/>
<evidence type="ECO:0000255" key="1">
    <source>
        <dbReference type="HAMAP-Rule" id="MF_00457"/>
    </source>
</evidence>
<organism>
    <name type="scientific">Metallosphaera sedula (strain ATCC 51363 / DSM 5348 / JCM 9185 / NBRC 15509 / TH2)</name>
    <dbReference type="NCBI Taxonomy" id="399549"/>
    <lineage>
        <taxon>Archaea</taxon>
        <taxon>Thermoproteota</taxon>
        <taxon>Thermoprotei</taxon>
        <taxon>Sulfolobales</taxon>
        <taxon>Sulfolobaceae</taxon>
        <taxon>Metallosphaera</taxon>
    </lineage>
</organism>
<keyword id="KW-0378">Hydrolase</keyword>
<keyword id="KW-1185">Reference proteome</keyword>
<gene>
    <name type="ordered locus">Msed_2125</name>
</gene>
<comment type="similarity">
    <text evidence="1">Belongs to the UPF0173 family.</text>
</comment>
<accession>A4YIL2</accession>
<protein>
    <recommendedName>
        <fullName evidence="1">UPF0173 metal-dependent hydrolase Msed_2125</fullName>
    </recommendedName>
</protein>